<reference key="1">
    <citation type="submission" date="2006-03" db="EMBL/GenBank/DDBJ databases">
        <title>Complete sequence of Shewanella denitrificans OS217.</title>
        <authorList>
            <consortium name="US DOE Joint Genome Institute"/>
            <person name="Copeland A."/>
            <person name="Lucas S."/>
            <person name="Lapidus A."/>
            <person name="Barry K."/>
            <person name="Detter J.C."/>
            <person name="Glavina del Rio T."/>
            <person name="Hammon N."/>
            <person name="Israni S."/>
            <person name="Dalin E."/>
            <person name="Tice H."/>
            <person name="Pitluck S."/>
            <person name="Brettin T."/>
            <person name="Bruce D."/>
            <person name="Han C."/>
            <person name="Tapia R."/>
            <person name="Gilna P."/>
            <person name="Kiss H."/>
            <person name="Schmutz J."/>
            <person name="Larimer F."/>
            <person name="Land M."/>
            <person name="Hauser L."/>
            <person name="Kyrpides N."/>
            <person name="Lykidis A."/>
            <person name="Richardson P."/>
        </authorList>
    </citation>
    <scope>NUCLEOTIDE SEQUENCE [LARGE SCALE GENOMIC DNA]</scope>
    <source>
        <strain>OS217 / ATCC BAA-1090 / DSM 15013</strain>
    </source>
</reference>
<keyword id="KW-0963">Cytoplasm</keyword>
<keyword id="KW-1185">Reference proteome</keyword>
<comment type="function">
    <text evidence="1">Sulfur carrier protein which probably makes part of a sulfur-relay system.</text>
</comment>
<comment type="subcellular location">
    <subcellularLocation>
        <location evidence="1">Cytoplasm</location>
    </subcellularLocation>
</comment>
<comment type="similarity">
    <text evidence="1">Belongs to the sulfur carrier protein TusA family.</text>
</comment>
<feature type="chain" id="PRO_1000050024" description="Sulfur carrier protein TusA">
    <location>
        <begin position="1"/>
        <end position="81"/>
    </location>
</feature>
<feature type="active site" description="Cysteine persulfide intermediate" evidence="1">
    <location>
        <position position="19"/>
    </location>
</feature>
<gene>
    <name evidence="1" type="primary">tusA</name>
    <name type="ordered locus">Sden_0013</name>
</gene>
<dbReference type="EMBL" id="CP000302">
    <property type="protein sequence ID" value="ABE53310.1"/>
    <property type="molecule type" value="Genomic_DNA"/>
</dbReference>
<dbReference type="RefSeq" id="WP_011494479.1">
    <property type="nucleotide sequence ID" value="NC_007954.1"/>
</dbReference>
<dbReference type="SMR" id="Q12TB6"/>
<dbReference type="STRING" id="318161.Sden_0013"/>
<dbReference type="KEGG" id="sdn:Sden_0013"/>
<dbReference type="eggNOG" id="COG0425">
    <property type="taxonomic scope" value="Bacteria"/>
</dbReference>
<dbReference type="HOGENOM" id="CLU_165255_5_0_6"/>
<dbReference type="OrthoDB" id="9797352at2"/>
<dbReference type="Proteomes" id="UP000001982">
    <property type="component" value="Chromosome"/>
</dbReference>
<dbReference type="GO" id="GO:0005737">
    <property type="term" value="C:cytoplasm"/>
    <property type="evidence" value="ECO:0007669"/>
    <property type="project" value="UniProtKB-SubCell"/>
</dbReference>
<dbReference type="GO" id="GO:0097163">
    <property type="term" value="F:sulfur carrier activity"/>
    <property type="evidence" value="ECO:0007669"/>
    <property type="project" value="UniProtKB-UniRule"/>
</dbReference>
<dbReference type="GO" id="GO:0002143">
    <property type="term" value="P:tRNA wobble position uridine thiolation"/>
    <property type="evidence" value="ECO:0007669"/>
    <property type="project" value="InterPro"/>
</dbReference>
<dbReference type="CDD" id="cd03423">
    <property type="entry name" value="SirA"/>
    <property type="match status" value="1"/>
</dbReference>
<dbReference type="Gene3D" id="3.30.110.40">
    <property type="entry name" value="TusA-like domain"/>
    <property type="match status" value="1"/>
</dbReference>
<dbReference type="HAMAP" id="MF_00413">
    <property type="entry name" value="Thiourid_synth_A"/>
    <property type="match status" value="1"/>
</dbReference>
<dbReference type="InterPro" id="IPR022931">
    <property type="entry name" value="Sulphur_carrier_TusA"/>
</dbReference>
<dbReference type="InterPro" id="IPR001455">
    <property type="entry name" value="TusA-like"/>
</dbReference>
<dbReference type="InterPro" id="IPR036868">
    <property type="entry name" value="TusA-like_sf"/>
</dbReference>
<dbReference type="NCBIfam" id="NF001423">
    <property type="entry name" value="PRK00299.1"/>
    <property type="match status" value="1"/>
</dbReference>
<dbReference type="PANTHER" id="PTHR33279:SF2">
    <property type="entry name" value="SULFUR CARRIER PROTEIN TUSA"/>
    <property type="match status" value="1"/>
</dbReference>
<dbReference type="PANTHER" id="PTHR33279">
    <property type="entry name" value="SULFUR CARRIER PROTEIN YEDF-RELATED"/>
    <property type="match status" value="1"/>
</dbReference>
<dbReference type="Pfam" id="PF01206">
    <property type="entry name" value="TusA"/>
    <property type="match status" value="1"/>
</dbReference>
<dbReference type="SUPFAM" id="SSF64307">
    <property type="entry name" value="SirA-like"/>
    <property type="match status" value="1"/>
</dbReference>
<dbReference type="PROSITE" id="PS01148">
    <property type="entry name" value="UPF0033"/>
    <property type="match status" value="1"/>
</dbReference>
<protein>
    <recommendedName>
        <fullName evidence="1">Sulfur carrier protein TusA</fullName>
    </recommendedName>
</protein>
<proteinExistence type="inferred from homology"/>
<evidence type="ECO:0000255" key="1">
    <source>
        <dbReference type="HAMAP-Rule" id="MF_00413"/>
    </source>
</evidence>
<sequence length="81" mass="9160">MTDVFSQAQHQLDALGLRCPEPVMMVRKTVRKMADGETLLIIADDPATTRDIPSFCEFMDHTLIASDTSKTPYQYLLKKGR</sequence>
<organism>
    <name type="scientific">Shewanella denitrificans (strain OS217 / ATCC BAA-1090 / DSM 15013)</name>
    <dbReference type="NCBI Taxonomy" id="318161"/>
    <lineage>
        <taxon>Bacteria</taxon>
        <taxon>Pseudomonadati</taxon>
        <taxon>Pseudomonadota</taxon>
        <taxon>Gammaproteobacteria</taxon>
        <taxon>Alteromonadales</taxon>
        <taxon>Shewanellaceae</taxon>
        <taxon>Shewanella</taxon>
    </lineage>
</organism>
<accession>Q12TB6</accession>
<name>TUSA_SHEDO</name>